<evidence type="ECO:0000255" key="1">
    <source>
        <dbReference type="HAMAP-Rule" id="MF_00661"/>
    </source>
</evidence>
<evidence type="ECO:0000256" key="2">
    <source>
        <dbReference type="SAM" id="MobiDB-lite"/>
    </source>
</evidence>
<reference key="1">
    <citation type="journal article" date="2004" name="Proc. Natl. Acad. Sci. U.S.A.">
        <title>Insights into the evolution of Yersinia pestis through whole-genome comparison with Yersinia pseudotuberculosis.</title>
        <authorList>
            <person name="Chain P.S.G."/>
            <person name="Carniel E."/>
            <person name="Larimer F.W."/>
            <person name="Lamerdin J."/>
            <person name="Stoutland P.O."/>
            <person name="Regala W.M."/>
            <person name="Georgescu A.M."/>
            <person name="Vergez L.M."/>
            <person name="Land M.L."/>
            <person name="Motin V.L."/>
            <person name="Brubaker R.R."/>
            <person name="Fowler J."/>
            <person name="Hinnebusch J."/>
            <person name="Marceau M."/>
            <person name="Medigue C."/>
            <person name="Simonet M."/>
            <person name="Chenal-Francisque V."/>
            <person name="Souza B."/>
            <person name="Dacheux D."/>
            <person name="Elliott J.M."/>
            <person name="Derbise A."/>
            <person name="Hauser L.J."/>
            <person name="Garcia E."/>
        </authorList>
    </citation>
    <scope>NUCLEOTIDE SEQUENCE [LARGE SCALE GENOMIC DNA]</scope>
    <source>
        <strain>IP32953</strain>
    </source>
</reference>
<protein>
    <recommendedName>
        <fullName evidence="1">ATP-dependent RNA helicase RhlB</fullName>
        <ecNumber evidence="1">3.6.4.13</ecNumber>
    </recommendedName>
</protein>
<gene>
    <name evidence="1" type="primary">rhlB</name>
    <name type="ordered locus">YPTB0165</name>
</gene>
<proteinExistence type="inferred from homology"/>
<dbReference type="EC" id="3.6.4.13" evidence="1"/>
<dbReference type="EMBL" id="BX936398">
    <property type="protein sequence ID" value="CAH19405.1"/>
    <property type="molecule type" value="Genomic_DNA"/>
</dbReference>
<dbReference type="RefSeq" id="WP_002228177.1">
    <property type="nucleotide sequence ID" value="NZ_CP009712.1"/>
</dbReference>
<dbReference type="SMR" id="Q66G19"/>
<dbReference type="GeneID" id="96663646"/>
<dbReference type="KEGG" id="ypo:BZ17_2424"/>
<dbReference type="KEGG" id="yps:YPTB0165"/>
<dbReference type="PATRIC" id="fig|273123.14.peg.2545"/>
<dbReference type="Proteomes" id="UP000001011">
    <property type="component" value="Chromosome"/>
</dbReference>
<dbReference type="GO" id="GO:0005829">
    <property type="term" value="C:cytosol"/>
    <property type="evidence" value="ECO:0007669"/>
    <property type="project" value="TreeGrafter"/>
</dbReference>
<dbReference type="GO" id="GO:0005524">
    <property type="term" value="F:ATP binding"/>
    <property type="evidence" value="ECO:0007669"/>
    <property type="project" value="UniProtKB-UniRule"/>
</dbReference>
<dbReference type="GO" id="GO:0016887">
    <property type="term" value="F:ATP hydrolysis activity"/>
    <property type="evidence" value="ECO:0007669"/>
    <property type="project" value="RHEA"/>
</dbReference>
<dbReference type="GO" id="GO:0003723">
    <property type="term" value="F:RNA binding"/>
    <property type="evidence" value="ECO:0007669"/>
    <property type="project" value="UniProtKB-UniRule"/>
</dbReference>
<dbReference type="GO" id="GO:0003724">
    <property type="term" value="F:RNA helicase activity"/>
    <property type="evidence" value="ECO:0007669"/>
    <property type="project" value="UniProtKB-UniRule"/>
</dbReference>
<dbReference type="GO" id="GO:0006401">
    <property type="term" value="P:RNA catabolic process"/>
    <property type="evidence" value="ECO:0007669"/>
    <property type="project" value="UniProtKB-UniRule"/>
</dbReference>
<dbReference type="CDD" id="cd00268">
    <property type="entry name" value="DEADc"/>
    <property type="match status" value="1"/>
</dbReference>
<dbReference type="CDD" id="cd18787">
    <property type="entry name" value="SF2_C_DEAD"/>
    <property type="match status" value="1"/>
</dbReference>
<dbReference type="FunFam" id="3.40.50.300:FF:000312">
    <property type="entry name" value="ATP-dependent RNA helicase RhlB"/>
    <property type="match status" value="1"/>
</dbReference>
<dbReference type="Gene3D" id="3.40.50.300">
    <property type="entry name" value="P-loop containing nucleotide triphosphate hydrolases"/>
    <property type="match status" value="2"/>
</dbReference>
<dbReference type="HAMAP" id="MF_00661">
    <property type="entry name" value="DEAD_helicase_RhlB"/>
    <property type="match status" value="1"/>
</dbReference>
<dbReference type="InterPro" id="IPR011545">
    <property type="entry name" value="DEAD/DEAH_box_helicase_dom"/>
</dbReference>
<dbReference type="InterPro" id="IPR050079">
    <property type="entry name" value="DEAD_box_RNA_helicase"/>
</dbReference>
<dbReference type="InterPro" id="IPR014001">
    <property type="entry name" value="Helicase_ATP-bd"/>
</dbReference>
<dbReference type="InterPro" id="IPR001650">
    <property type="entry name" value="Helicase_C-like"/>
</dbReference>
<dbReference type="InterPro" id="IPR027417">
    <property type="entry name" value="P-loop_NTPase"/>
</dbReference>
<dbReference type="InterPro" id="IPR000629">
    <property type="entry name" value="RNA-helicase_DEAD-box_CS"/>
</dbReference>
<dbReference type="InterPro" id="IPR023554">
    <property type="entry name" value="RNA_helicase_ATP-dep_RhlB"/>
</dbReference>
<dbReference type="InterPro" id="IPR014014">
    <property type="entry name" value="RNA_helicase_DEAD_Q_motif"/>
</dbReference>
<dbReference type="NCBIfam" id="NF003419">
    <property type="entry name" value="PRK04837.1"/>
    <property type="match status" value="1"/>
</dbReference>
<dbReference type="PANTHER" id="PTHR47959:SF10">
    <property type="entry name" value="ATP-DEPENDENT RNA HELICASE RHLB"/>
    <property type="match status" value="1"/>
</dbReference>
<dbReference type="PANTHER" id="PTHR47959">
    <property type="entry name" value="ATP-DEPENDENT RNA HELICASE RHLE-RELATED"/>
    <property type="match status" value="1"/>
</dbReference>
<dbReference type="Pfam" id="PF00270">
    <property type="entry name" value="DEAD"/>
    <property type="match status" value="1"/>
</dbReference>
<dbReference type="Pfam" id="PF00271">
    <property type="entry name" value="Helicase_C"/>
    <property type="match status" value="1"/>
</dbReference>
<dbReference type="SMART" id="SM00487">
    <property type="entry name" value="DEXDc"/>
    <property type="match status" value="1"/>
</dbReference>
<dbReference type="SMART" id="SM00490">
    <property type="entry name" value="HELICc"/>
    <property type="match status" value="1"/>
</dbReference>
<dbReference type="SUPFAM" id="SSF52540">
    <property type="entry name" value="P-loop containing nucleoside triphosphate hydrolases"/>
    <property type="match status" value="1"/>
</dbReference>
<dbReference type="PROSITE" id="PS00039">
    <property type="entry name" value="DEAD_ATP_HELICASE"/>
    <property type="match status" value="1"/>
</dbReference>
<dbReference type="PROSITE" id="PS51192">
    <property type="entry name" value="HELICASE_ATP_BIND_1"/>
    <property type="match status" value="1"/>
</dbReference>
<dbReference type="PROSITE" id="PS51194">
    <property type="entry name" value="HELICASE_CTER"/>
    <property type="match status" value="1"/>
</dbReference>
<dbReference type="PROSITE" id="PS51195">
    <property type="entry name" value="Q_MOTIF"/>
    <property type="match status" value="1"/>
</dbReference>
<name>RHLB_YERPS</name>
<feature type="chain" id="PRO_0000200796" description="ATP-dependent RNA helicase RhlB">
    <location>
        <begin position="1"/>
        <end position="428"/>
    </location>
</feature>
<feature type="domain" description="Helicase ATP-binding" evidence="1">
    <location>
        <begin position="40"/>
        <end position="219"/>
    </location>
</feature>
<feature type="domain" description="Helicase C-terminal" evidence="1">
    <location>
        <begin position="245"/>
        <end position="390"/>
    </location>
</feature>
<feature type="region of interest" description="Disordered" evidence="2">
    <location>
        <begin position="394"/>
        <end position="428"/>
    </location>
</feature>
<feature type="short sequence motif" description="Q motif">
    <location>
        <begin position="9"/>
        <end position="37"/>
    </location>
</feature>
<feature type="short sequence motif" description="DEAD box">
    <location>
        <begin position="165"/>
        <end position="168"/>
    </location>
</feature>
<feature type="binding site" evidence="1">
    <location>
        <begin position="53"/>
        <end position="60"/>
    </location>
    <ligand>
        <name>ATP</name>
        <dbReference type="ChEBI" id="CHEBI:30616"/>
    </ligand>
</feature>
<organism>
    <name type="scientific">Yersinia pseudotuberculosis serotype I (strain IP32953)</name>
    <dbReference type="NCBI Taxonomy" id="273123"/>
    <lineage>
        <taxon>Bacteria</taxon>
        <taxon>Pseudomonadati</taxon>
        <taxon>Pseudomonadota</taxon>
        <taxon>Gammaproteobacteria</taxon>
        <taxon>Enterobacterales</taxon>
        <taxon>Yersiniaceae</taxon>
        <taxon>Yersinia</taxon>
    </lineage>
</organism>
<keyword id="KW-0067">ATP-binding</keyword>
<keyword id="KW-0963">Cytoplasm</keyword>
<keyword id="KW-0347">Helicase</keyword>
<keyword id="KW-0378">Hydrolase</keyword>
<keyword id="KW-0547">Nucleotide-binding</keyword>
<keyword id="KW-0694">RNA-binding</keyword>
<accession>Q66G19</accession>
<sequence>MSKTHLTEQKFSDFALHPLVVEALENKGFQYCTPIQALALPLTLSGRDVAGQAQTGTGKTLAFLASTFHYLLSHPAEEGRQTNQPRALIMAPTRELAVQIHSDAESLSQVTGLKLGLAYGGDGYDKQLKVLESGVDILIGTTGRLIDYAKQNYINLGAIQVVVLDEADRMYDLGFIKDIRWLFRRMPSVDKRLNMLFSATLSYRVRELAFEQMNNAEYVEVEPLQKTGHRIKEELFYPSNEEKMRLLQTLIEEEWPDRCIIFANTKHRCEEIWGHLAADGHRVGLLTGDVAQKKRLRILEDFTKGDLDILVATDVAARGLHIPLVTHVFNYDLPDDCEDYVHRIGRTGRAGESGHSISLACEEYALNLPAIETYTGHSIPVSKYNSDALLTDLPAPKRLARTRTGNGPRRNSAPRRSGAPRNNRKRPG</sequence>
<comment type="function">
    <text evidence="1">DEAD-box RNA helicase involved in RNA degradation. Has RNA-dependent ATPase activity and unwinds double-stranded RNA.</text>
</comment>
<comment type="catalytic activity">
    <reaction evidence="1">
        <text>ATP + H2O = ADP + phosphate + H(+)</text>
        <dbReference type="Rhea" id="RHEA:13065"/>
        <dbReference type="ChEBI" id="CHEBI:15377"/>
        <dbReference type="ChEBI" id="CHEBI:15378"/>
        <dbReference type="ChEBI" id="CHEBI:30616"/>
        <dbReference type="ChEBI" id="CHEBI:43474"/>
        <dbReference type="ChEBI" id="CHEBI:456216"/>
        <dbReference type="EC" id="3.6.4.13"/>
    </reaction>
</comment>
<comment type="subunit">
    <text evidence="1">Component of the RNA degradosome, which is a multiprotein complex involved in RNA processing and mRNA degradation.</text>
</comment>
<comment type="subcellular location">
    <subcellularLocation>
        <location evidence="1">Cytoplasm</location>
    </subcellularLocation>
</comment>
<comment type="similarity">
    <text evidence="1">Belongs to the DEAD box helicase family. RhlB subfamily.</text>
</comment>